<protein>
    <recommendedName>
        <fullName>Probable kinetochore protein SPC25</fullName>
    </recommendedName>
</protein>
<gene>
    <name type="primary">SPC25</name>
    <name type="ORF">FGRRES_01538</name>
    <name type="ORF">FGSG_01538</name>
</gene>
<organism>
    <name type="scientific">Gibberella zeae (strain ATCC MYA-4620 / CBS 123657 / FGSC 9075 / NRRL 31084 / PH-1)</name>
    <name type="common">Wheat head blight fungus</name>
    <name type="synonym">Fusarium graminearum</name>
    <dbReference type="NCBI Taxonomy" id="229533"/>
    <lineage>
        <taxon>Eukaryota</taxon>
        <taxon>Fungi</taxon>
        <taxon>Dikarya</taxon>
        <taxon>Ascomycota</taxon>
        <taxon>Pezizomycotina</taxon>
        <taxon>Sordariomycetes</taxon>
        <taxon>Hypocreomycetidae</taxon>
        <taxon>Hypocreales</taxon>
        <taxon>Nectriaceae</taxon>
        <taxon>Fusarium</taxon>
    </lineage>
</organism>
<keyword id="KW-0131">Cell cycle</keyword>
<keyword id="KW-0132">Cell division</keyword>
<keyword id="KW-0137">Centromere</keyword>
<keyword id="KW-0158">Chromosome</keyword>
<keyword id="KW-0175">Coiled coil</keyword>
<keyword id="KW-0995">Kinetochore</keyword>
<keyword id="KW-0498">Mitosis</keyword>
<keyword id="KW-0539">Nucleus</keyword>
<keyword id="KW-1185">Reference proteome</keyword>
<comment type="function">
    <text evidence="1">Acts as a component of the essential kinetochore-associated NDC80 complex, which is required for chromosome segregation and spindle checkpoint activity.</text>
</comment>
<comment type="subunit">
    <text evidence="1">Component of the NDC80 complex, which consists of NDC80, NUF2, SPC24 and SPC25.</text>
</comment>
<comment type="subcellular location">
    <subcellularLocation>
        <location evidence="2">Nucleus</location>
    </subcellularLocation>
    <subcellularLocation>
        <location evidence="2">Chromosome</location>
        <location evidence="2">Centromere</location>
        <location evidence="2">Kinetochore</location>
    </subcellularLocation>
    <text evidence="2">Associated with kinetochores.</text>
</comment>
<comment type="similarity">
    <text evidence="5">Belongs to the SPC25 family.</text>
</comment>
<reference key="1">
    <citation type="journal article" date="2007" name="Science">
        <title>The Fusarium graminearum genome reveals a link between localized polymorphism and pathogen specialization.</title>
        <authorList>
            <person name="Cuomo C.A."/>
            <person name="Gueldener U."/>
            <person name="Xu J.-R."/>
            <person name="Trail F."/>
            <person name="Turgeon B.G."/>
            <person name="Di Pietro A."/>
            <person name="Walton J.D."/>
            <person name="Ma L.-J."/>
            <person name="Baker S.E."/>
            <person name="Rep M."/>
            <person name="Adam G."/>
            <person name="Antoniw J."/>
            <person name="Baldwin T."/>
            <person name="Calvo S.E."/>
            <person name="Chang Y.-L."/>
            <person name="DeCaprio D."/>
            <person name="Gale L.R."/>
            <person name="Gnerre S."/>
            <person name="Goswami R.S."/>
            <person name="Hammond-Kosack K."/>
            <person name="Harris L.J."/>
            <person name="Hilburn K."/>
            <person name="Kennell J.C."/>
            <person name="Kroken S."/>
            <person name="Magnuson J.K."/>
            <person name="Mannhaupt G."/>
            <person name="Mauceli E.W."/>
            <person name="Mewes H.-W."/>
            <person name="Mitterbauer R."/>
            <person name="Muehlbauer G."/>
            <person name="Muensterkoetter M."/>
            <person name="Nelson D."/>
            <person name="O'Donnell K."/>
            <person name="Ouellet T."/>
            <person name="Qi W."/>
            <person name="Quesneville H."/>
            <person name="Roncero M.I.G."/>
            <person name="Seong K.-Y."/>
            <person name="Tetko I.V."/>
            <person name="Urban M."/>
            <person name="Waalwijk C."/>
            <person name="Ward T.J."/>
            <person name="Yao J."/>
            <person name="Birren B.W."/>
            <person name="Kistler H.C."/>
        </authorList>
    </citation>
    <scope>NUCLEOTIDE SEQUENCE [LARGE SCALE GENOMIC DNA]</scope>
    <source>
        <strain>ATCC MYA-4620 / CBS 123657 / FGSC 9075 / NRRL 31084 / PH-1</strain>
    </source>
</reference>
<reference key="2">
    <citation type="journal article" date="2010" name="Nature">
        <title>Comparative genomics reveals mobile pathogenicity chromosomes in Fusarium.</title>
        <authorList>
            <person name="Ma L.-J."/>
            <person name="van der Does H.C."/>
            <person name="Borkovich K.A."/>
            <person name="Coleman J.J."/>
            <person name="Daboussi M.-J."/>
            <person name="Di Pietro A."/>
            <person name="Dufresne M."/>
            <person name="Freitag M."/>
            <person name="Grabherr M."/>
            <person name="Henrissat B."/>
            <person name="Houterman P.M."/>
            <person name="Kang S."/>
            <person name="Shim W.-B."/>
            <person name="Woloshuk C."/>
            <person name="Xie X."/>
            <person name="Xu J.-R."/>
            <person name="Antoniw J."/>
            <person name="Baker S.E."/>
            <person name="Bluhm B.H."/>
            <person name="Breakspear A."/>
            <person name="Brown D.W."/>
            <person name="Butchko R.A.E."/>
            <person name="Chapman S."/>
            <person name="Coulson R."/>
            <person name="Coutinho P.M."/>
            <person name="Danchin E.G.J."/>
            <person name="Diener A."/>
            <person name="Gale L.R."/>
            <person name="Gardiner D.M."/>
            <person name="Goff S."/>
            <person name="Hammond-Kosack K.E."/>
            <person name="Hilburn K."/>
            <person name="Hua-Van A."/>
            <person name="Jonkers W."/>
            <person name="Kazan K."/>
            <person name="Kodira C.D."/>
            <person name="Koehrsen M."/>
            <person name="Kumar L."/>
            <person name="Lee Y.-H."/>
            <person name="Li L."/>
            <person name="Manners J.M."/>
            <person name="Miranda-Saavedra D."/>
            <person name="Mukherjee M."/>
            <person name="Park G."/>
            <person name="Park J."/>
            <person name="Park S.-Y."/>
            <person name="Proctor R.H."/>
            <person name="Regev A."/>
            <person name="Ruiz-Roldan M.C."/>
            <person name="Sain D."/>
            <person name="Sakthikumar S."/>
            <person name="Sykes S."/>
            <person name="Schwartz D.C."/>
            <person name="Turgeon B.G."/>
            <person name="Wapinski I."/>
            <person name="Yoder O."/>
            <person name="Young S."/>
            <person name="Zeng Q."/>
            <person name="Zhou S."/>
            <person name="Galagan J."/>
            <person name="Cuomo C.A."/>
            <person name="Kistler H.C."/>
            <person name="Rep M."/>
        </authorList>
    </citation>
    <scope>GENOME REANNOTATION</scope>
    <source>
        <strain>ATCC MYA-4620 / CBS 123657 / FGSC 9075 / NRRL 31084 / PH-1</strain>
    </source>
</reference>
<reference key="3">
    <citation type="journal article" date="2015" name="BMC Genomics">
        <title>The completed genome sequence of the pathogenic ascomycete fungus Fusarium graminearum.</title>
        <authorList>
            <person name="King R."/>
            <person name="Urban M."/>
            <person name="Hammond-Kosack M.C.U."/>
            <person name="Hassani-Pak K."/>
            <person name="Hammond-Kosack K.E."/>
        </authorList>
    </citation>
    <scope>NUCLEOTIDE SEQUENCE [LARGE SCALE GENOMIC DNA]</scope>
    <source>
        <strain>ATCC MYA-4620 / CBS 123657 / FGSC 9075 / NRRL 31084 / PH-1</strain>
    </source>
</reference>
<accession>Q4IMM0</accession>
<accession>A0A0E0RR07</accession>
<accession>I1RD49</accession>
<accession>V6QWZ0</accession>
<dbReference type="EMBL" id="DS231663">
    <property type="protein sequence ID" value="ESU06863.1"/>
    <property type="molecule type" value="Genomic_DNA"/>
</dbReference>
<dbReference type="EMBL" id="HG970332">
    <property type="protein sequence ID" value="CEF73682.1"/>
    <property type="molecule type" value="Genomic_DNA"/>
</dbReference>
<dbReference type="RefSeq" id="XP_011317348.1">
    <property type="nucleotide sequence ID" value="XM_011319046.1"/>
</dbReference>
<dbReference type="SMR" id="Q4IMM0"/>
<dbReference type="STRING" id="229533.Q4IMM0"/>
<dbReference type="GeneID" id="23548972"/>
<dbReference type="KEGG" id="fgr:FGSG_01538"/>
<dbReference type="VEuPathDB" id="FungiDB:FGRAMPH1_01G03753"/>
<dbReference type="eggNOG" id="KOG4657">
    <property type="taxonomic scope" value="Eukaryota"/>
</dbReference>
<dbReference type="HOGENOM" id="CLU_065188_0_0_1"/>
<dbReference type="InParanoid" id="Q4IMM0"/>
<dbReference type="OrthoDB" id="73524at110618"/>
<dbReference type="Proteomes" id="UP000070720">
    <property type="component" value="Chromosome 1"/>
</dbReference>
<dbReference type="GO" id="GO:0031262">
    <property type="term" value="C:Ndc80 complex"/>
    <property type="evidence" value="ECO:0000250"/>
    <property type="project" value="UniProtKB"/>
</dbReference>
<dbReference type="GO" id="GO:0005634">
    <property type="term" value="C:nucleus"/>
    <property type="evidence" value="ECO:0007669"/>
    <property type="project" value="UniProtKB-SubCell"/>
</dbReference>
<dbReference type="GO" id="GO:0051301">
    <property type="term" value="P:cell division"/>
    <property type="evidence" value="ECO:0007669"/>
    <property type="project" value="UniProtKB-KW"/>
</dbReference>
<dbReference type="GO" id="GO:0007059">
    <property type="term" value="P:chromosome segregation"/>
    <property type="evidence" value="ECO:0007669"/>
    <property type="project" value="InterPro"/>
</dbReference>
<dbReference type="CDD" id="cd23784">
    <property type="entry name" value="RWD_Spc25"/>
    <property type="match status" value="1"/>
</dbReference>
<dbReference type="FunFam" id="3.30.457.50:FF:000001">
    <property type="entry name" value="Probable kinetochore protein spc25"/>
    <property type="match status" value="1"/>
</dbReference>
<dbReference type="Gene3D" id="3.30.457.50">
    <property type="entry name" value="Chromosome segregation protein Spc25"/>
    <property type="match status" value="1"/>
</dbReference>
<dbReference type="InterPro" id="IPR045143">
    <property type="entry name" value="Spc25"/>
</dbReference>
<dbReference type="InterPro" id="IPR013255">
    <property type="entry name" value="Spc25_C"/>
</dbReference>
<dbReference type="PANTHER" id="PTHR14281:SF0">
    <property type="entry name" value="KINETOCHORE PROTEIN SPC25"/>
    <property type="match status" value="1"/>
</dbReference>
<dbReference type="PANTHER" id="PTHR14281">
    <property type="entry name" value="KINETOCHORE PROTEIN SPC25-RELATED"/>
    <property type="match status" value="1"/>
</dbReference>
<dbReference type="Pfam" id="PF08234">
    <property type="entry name" value="Spindle_Spc25"/>
    <property type="match status" value="1"/>
</dbReference>
<feature type="chain" id="PRO_0000246676" description="Probable kinetochore protein SPC25">
    <location>
        <begin position="1"/>
        <end position="257"/>
    </location>
</feature>
<feature type="region of interest" description="Disordered" evidence="4">
    <location>
        <begin position="1"/>
        <end position="23"/>
    </location>
</feature>
<feature type="coiled-coil region" evidence="3">
    <location>
        <begin position="57"/>
        <end position="143"/>
    </location>
</feature>
<feature type="compositionally biased region" description="Polar residues" evidence="4">
    <location>
        <begin position="1"/>
        <end position="15"/>
    </location>
</feature>
<proteinExistence type="inferred from homology"/>
<name>SPC25_GIBZE</name>
<evidence type="ECO:0000250" key="1"/>
<evidence type="ECO:0000250" key="2">
    <source>
        <dbReference type="UniProtKB" id="P40014"/>
    </source>
</evidence>
<evidence type="ECO:0000255" key="3"/>
<evidence type="ECO:0000256" key="4">
    <source>
        <dbReference type="SAM" id="MobiDB-lite"/>
    </source>
</evidence>
<evidence type="ECO:0000305" key="5"/>
<sequence length="257" mass="30146">MATDFRSSFSASMRQSMPPVGPSVANQLPNINFGFDDLRDRMAKFTARFDAFIEEGRKRVLDERNQFRMNVAELQEDQRMKKRDIEIVQTKTATHQQTIEKEKAETREMETAINSLASQRDNHLSTRDSLKAEIAQTQAEIETRLAAQREYAQHQQSQSRFNVPELDFWITNLCLKIEGAGHDDRLKFVYTHVDEKDWEREAWFELVTSSRDYDVKHCRPKVEREKVEKVLDKLNESRELVVLLKGMRELFVEAMKS</sequence>